<name>P2OX_TRIMT</name>
<protein>
    <recommendedName>
        <fullName>Pyranose 2-oxidase</fullName>
        <shortName>P2Ox</shortName>
        <shortName>POD</shortName>
        <shortName>POx</shortName>
        <shortName>PROD</shortName>
        <shortName>Pyranose oxidase</shortName>
        <ecNumber>1.1.3.10</ecNumber>
    </recommendedName>
    <alternativeName>
        <fullName>FAD-oxidoreductase</fullName>
    </alternativeName>
    <alternativeName>
        <fullName>Glucose 2-oxidase</fullName>
    </alternativeName>
    <alternativeName>
        <fullName>Pyranose:oxygen 2-oxidoreductase</fullName>
    </alternativeName>
</protein>
<keyword id="KW-0903">Direct protein sequencing</keyword>
<keyword id="KW-0274">FAD</keyword>
<keyword id="KW-0285">Flavoprotein</keyword>
<keyword id="KW-0560">Oxidoreductase</keyword>
<comment type="function">
    <text>Catalyzes the oxidation of various aldopyranoses and disaccharides on carbon-2 to the corresponding 2-keto sugars concomitant with the reduction of O(2) to H(2)O(2). The preferred substrate is D-glucose which is converted to 2-dehydro-D-glucose. Acts also on D-xylose, L-sorbose, D-galactose and 1,5-anhydroglucitol, a diagnostic marker of diabetes mellitus.</text>
</comment>
<comment type="catalytic activity">
    <reaction>
        <text>D-glucose + O2 = 2-dehydro-D-glucose + H2O2</text>
        <dbReference type="Rhea" id="RHEA:10552"/>
        <dbReference type="ChEBI" id="CHEBI:4167"/>
        <dbReference type="ChEBI" id="CHEBI:15379"/>
        <dbReference type="ChEBI" id="CHEBI:16240"/>
        <dbReference type="ChEBI" id="CHEBI:16609"/>
        <dbReference type="EC" id="1.1.3.10"/>
    </reaction>
</comment>
<comment type="cofactor">
    <cofactor evidence="3">
        <name>FAD</name>
        <dbReference type="ChEBI" id="CHEBI:57692"/>
    </cofactor>
    <text evidence="3">Binds 1 FAD covalently per subunit.</text>
</comment>
<comment type="biophysicochemical properties">
    <kinetics>
        <KM evidence="3">1.28 mM for D-glucose</KM>
        <KM evidence="3">45.8 mM for D-xylose</KM>
        <KM evidence="3">26.4 mM for L-sorbose</KM>
        <KM evidence="3">45 mM for D-galactose</KM>
        <KM evidence="3">10.7 mM for 1,5-anhydro-D-glucitol</KM>
        <KM evidence="3">192 mM for trehalose</KM>
        <KM evidence="3">329 mM for maltose</KM>
        <KM evidence="3">295 mM for mannose</KM>
        <KM evidence="3">174 mM for D-arabinose</KM>
        <Vmax evidence="3">26.6 umol/min/mg enzyme with D-glucose as substrate</Vmax>
        <Vmax evidence="3">13.4 umol/min/mg enzyme with D-xylose as substrate</Vmax>
        <Vmax evidence="3">17.9 umol/min/mg enzyme with L-sorbose as substrate</Vmax>
        <Vmax evidence="3">5.41 umol/min/mg enzyme with D-galactose as substrate</Vmax>
        <Vmax evidence="3">18.4 umol/min/mg enzyme with 1,5-anhydro-D-glucitol as substrate</Vmax>
        <Vmax evidence="3">14.3 umol/min/mg enzyme with trehalose as substrate</Vmax>
        <Vmax evidence="3">15.1 umol/min/mg enzyme with maltose as substrate</Vmax>
        <Vmax evidence="3">6.02 umol/min/mg enzyme with mannose as substrate</Vmax>
        <Vmax evidence="3">1.87 umol/min/mg enzyme with D-arabinose as substrate</Vmax>
    </kinetics>
    <phDependence>
        <text evidence="3">Optimum pH is 7.5-8.0. Active from pH 6 to 10. Stable from pH 5 to 11.</text>
    </phDependence>
    <temperatureDependence>
        <text evidence="3">Optimum temperature is 50 degrees Celsius. Active from 30 to 65 degrees Celsius. Thermostable for 30 minutes up to 55 degrees Celsius.</text>
    </temperatureDependence>
</comment>
<comment type="subunit">
    <text>Homotetramer.</text>
</comment>
<comment type="similarity">
    <text evidence="4">Belongs to the GMC oxidoreductase family.</text>
</comment>
<organism>
    <name type="scientific">Tricholoma matsutake</name>
    <name type="common">Matsutake mushroom</name>
    <name type="synonym">Tricholoma nauseosum</name>
    <dbReference type="NCBI Taxonomy" id="40145"/>
    <lineage>
        <taxon>Eukaryota</taxon>
        <taxon>Fungi</taxon>
        <taxon>Dikarya</taxon>
        <taxon>Basidiomycota</taxon>
        <taxon>Agaricomycotina</taxon>
        <taxon>Agaricomycetes</taxon>
        <taxon>Agaricomycetidae</taxon>
        <taxon>Agaricales</taxon>
        <taxon>Tricholomatineae</taxon>
        <taxon>Tricholomataceae</taxon>
        <taxon>Tricholoma</taxon>
    </lineage>
</organism>
<feature type="propeptide" id="PRO_0000012358" evidence="3">
    <location>
        <begin position="1"/>
        <end position="25"/>
    </location>
</feature>
<feature type="chain" id="PRO_0000012359" description="Pyranose 2-oxidase">
    <location>
        <begin position="26"/>
        <end position="564"/>
    </location>
</feature>
<feature type="active site" description="Proton acceptor" evidence="2">
    <location>
        <position position="498"/>
    </location>
</feature>
<feature type="active site" evidence="1">
    <location>
        <position position="541"/>
    </location>
</feature>
<feature type="binding site" evidence="1">
    <location>
        <position position="392"/>
    </location>
    <ligand>
        <name>substrate</name>
    </ligand>
</feature>
<feature type="binding site" evidence="1">
    <location>
        <position position="394"/>
    </location>
    <ligand>
        <name>substrate</name>
    </ligand>
</feature>
<feature type="modified residue" description="Tele-8alpha-FAD histidine" evidence="1">
    <location>
        <position position="158"/>
    </location>
</feature>
<feature type="sequence conflict" description="In Ref. 1; AA sequence." evidence="4" ref="1">
    <original>D</original>
    <variation>H</variation>
    <location>
        <position position="26"/>
    </location>
</feature>
<feature type="sequence conflict" description="In Ref. 1; AA sequence." evidence="4" ref="1">
    <original>A</original>
    <variation>S</variation>
    <location>
        <position position="43"/>
    </location>
</feature>
<feature type="sequence conflict" description="In Ref. 1; AA sequence." evidence="4" ref="1">
    <original>D</original>
    <variation>E</variation>
    <location>
        <position position="437"/>
    </location>
</feature>
<feature type="sequence conflict" description="In Ref. 1; AA sequence." evidence="4" ref="1">
    <original>I</original>
    <variation>M</variation>
    <location>
        <position position="478"/>
    </location>
</feature>
<feature type="sequence conflict" description="In Ref. 1; AA sequence." evidence="4" ref="1">
    <original>AQ</original>
    <variation>VL</variation>
    <location>
        <begin position="496"/>
        <end position="497"/>
    </location>
</feature>
<gene>
    <name type="primary">p2ox</name>
    <name type="synonym">p2o</name>
</gene>
<evidence type="ECO:0000250" key="1"/>
<evidence type="ECO:0000250" key="2">
    <source>
        <dbReference type="UniProtKB" id="E4QP00"/>
    </source>
</evidence>
<evidence type="ECO:0000269" key="3">
    <source>
    </source>
</evidence>
<evidence type="ECO:0000305" key="4"/>
<dbReference type="EC" id="1.1.3.10"/>
<dbReference type="EMBL" id="AB043883">
    <property type="protein sequence ID" value="BAC24805.1"/>
    <property type="molecule type" value="mRNA"/>
</dbReference>
<dbReference type="SMR" id="Q8J2V8"/>
<dbReference type="BioCyc" id="MetaCyc:MONOMER-14333"/>
<dbReference type="GO" id="GO:0050660">
    <property type="term" value="F:flavin adenine dinucleotide binding"/>
    <property type="evidence" value="ECO:0007669"/>
    <property type="project" value="InterPro"/>
</dbReference>
<dbReference type="GO" id="GO:0050233">
    <property type="term" value="F:pyranose oxidase activity"/>
    <property type="evidence" value="ECO:0007669"/>
    <property type="project" value="UniProtKB-EC"/>
</dbReference>
<dbReference type="Gene3D" id="3.50.50.60">
    <property type="entry name" value="FAD/NAD(P)-binding domain"/>
    <property type="match status" value="2"/>
</dbReference>
<dbReference type="InterPro" id="IPR036188">
    <property type="entry name" value="FAD/NAD-bd_sf"/>
</dbReference>
<dbReference type="InterPro" id="IPR000172">
    <property type="entry name" value="GMC_OxRdtase_N"/>
</dbReference>
<dbReference type="InterPro" id="IPR007867">
    <property type="entry name" value="GMC_OxRtase_C"/>
</dbReference>
<dbReference type="InterPro" id="IPR012814">
    <property type="entry name" value="P2OX"/>
</dbReference>
<dbReference type="InterPro" id="IPR051473">
    <property type="entry name" value="P2Ox-like"/>
</dbReference>
<dbReference type="NCBIfam" id="TIGR02462">
    <property type="entry name" value="pyranose_ox"/>
    <property type="match status" value="1"/>
</dbReference>
<dbReference type="PANTHER" id="PTHR42784">
    <property type="entry name" value="PYRANOSE 2-OXIDASE"/>
    <property type="match status" value="1"/>
</dbReference>
<dbReference type="PANTHER" id="PTHR42784:SF1">
    <property type="entry name" value="PYRANOSE 2-OXIDASE"/>
    <property type="match status" value="1"/>
</dbReference>
<dbReference type="Pfam" id="PF05199">
    <property type="entry name" value="GMC_oxred_C"/>
    <property type="match status" value="1"/>
</dbReference>
<dbReference type="Pfam" id="PF00732">
    <property type="entry name" value="GMC_oxred_N"/>
    <property type="match status" value="1"/>
</dbReference>
<dbReference type="SUPFAM" id="SSF54373">
    <property type="entry name" value="FAD-linked reductases, C-terminal domain"/>
    <property type="match status" value="1"/>
</dbReference>
<dbReference type="SUPFAM" id="SSF51905">
    <property type="entry name" value="FAD/NAD(P)-binding domain"/>
    <property type="match status" value="1"/>
</dbReference>
<accession>Q8J2V8</accession>
<sequence length="564" mass="61942">MPIRLSKEKINDLLQRSQGDLTSSQDEIVHYTDVFIAGSGPIACTYARHIIDNTSTTKVYMAEIGSQDNPVIGAHHRNSIKFQKDTDKFVNIINGALQPISISPSDTYQPTLAVAAWAPPIDPAEGQLVIMGHNPNQEAGLNLPGSAVTRTVGGMATHWTCACPTPHDEERVNNPVDKQEFDALLERAKTLLNVHSDQYDDSIRQIVVKETLQQTLDASRGVTTLPLGVERRTDNPIYVTWTGADTVLGDVPKSPRFVLVTETRVTKFIVSETNPTQVVAALLRNLNTSNDELVVAQSFVIACGAVCTPQILWNSNIRPHALGRYLSEQSMTFCQIVLKRSIVDSIATDPRFAAKVEAHKKKHPDDVLPIPFHEPEPQVMIPYTSDFPWHVQVHRYAFGDVGPKADPRVVVDLRFFGKSDIVEENRVTFGPNPKLRDWEAGVTDTYGMPQPTFHVKRTNADGDRDQRMMNDMTNVANILGGYLPGSYPQFMAPGLAQHITGTTRIGTDDQTSVADPTSKVHNFDNLWVGGNGCIPDATACNPTRTSVAYALKGAEAVVSYLGVS</sequence>
<reference key="1">
    <citation type="journal article" date="2003" name="Biosci. Biotechnol. Biochem.">
        <title>Purification, characterization, and molecular cloning of a pyranose oxidase from the fruit body of the basidiomycete, Tricholoma matsutake.</title>
        <authorList>
            <person name="Takakura Y."/>
            <person name="Kuwata S."/>
        </authorList>
    </citation>
    <scope>NUCLEOTIDE SEQUENCE [MRNA]</scope>
    <scope>PROTEIN SEQUENCE OF 26-57 AND 436-502</scope>
    <scope>BIOPHYSICOCHEMICAL PROPERTIES</scope>
    <scope>FAD-BINDING</scope>
    <scope>TETRAMERIZATION</scope>
</reference>
<proteinExistence type="evidence at protein level"/>